<gene>
    <name evidence="1" type="primary">panD</name>
    <name type="ordered locus">Mjls_5147</name>
</gene>
<comment type="function">
    <text evidence="1">Catalyzes the pyruvoyl-dependent decarboxylation of aspartate to produce beta-alanine.</text>
</comment>
<comment type="catalytic activity">
    <reaction evidence="1">
        <text>L-aspartate + H(+) = beta-alanine + CO2</text>
        <dbReference type="Rhea" id="RHEA:19497"/>
        <dbReference type="ChEBI" id="CHEBI:15378"/>
        <dbReference type="ChEBI" id="CHEBI:16526"/>
        <dbReference type="ChEBI" id="CHEBI:29991"/>
        <dbReference type="ChEBI" id="CHEBI:57966"/>
        <dbReference type="EC" id="4.1.1.11"/>
    </reaction>
</comment>
<comment type="cofactor">
    <cofactor evidence="1">
        <name>pyruvate</name>
        <dbReference type="ChEBI" id="CHEBI:15361"/>
    </cofactor>
    <text evidence="1">Binds 1 pyruvoyl group covalently per subunit.</text>
</comment>
<comment type="pathway">
    <text evidence="1">Cofactor biosynthesis; (R)-pantothenate biosynthesis; beta-alanine from L-aspartate: step 1/1.</text>
</comment>
<comment type="subunit">
    <text evidence="1">Heterooctamer of four alpha and four beta subunits.</text>
</comment>
<comment type="subcellular location">
    <subcellularLocation>
        <location evidence="1">Cytoplasm</location>
    </subcellularLocation>
</comment>
<comment type="PTM">
    <text evidence="1">Is synthesized initially as an inactive proenzyme, which is activated by self-cleavage at a specific serine bond to produce a beta-subunit with a hydroxyl group at its C-terminus and an alpha-subunit with a pyruvoyl group at its N-terminus.</text>
</comment>
<comment type="similarity">
    <text evidence="1">Belongs to the PanD family.</text>
</comment>
<evidence type="ECO:0000255" key="1">
    <source>
        <dbReference type="HAMAP-Rule" id="MF_00446"/>
    </source>
</evidence>
<organism>
    <name type="scientific">Mycobacterium sp. (strain JLS)</name>
    <dbReference type="NCBI Taxonomy" id="164757"/>
    <lineage>
        <taxon>Bacteria</taxon>
        <taxon>Bacillati</taxon>
        <taxon>Actinomycetota</taxon>
        <taxon>Actinomycetes</taxon>
        <taxon>Mycobacteriales</taxon>
        <taxon>Mycobacteriaceae</taxon>
        <taxon>Mycobacterium</taxon>
    </lineage>
</organism>
<protein>
    <recommendedName>
        <fullName evidence="1">Aspartate 1-decarboxylase</fullName>
        <ecNumber evidence="1">4.1.1.11</ecNumber>
    </recommendedName>
    <alternativeName>
        <fullName evidence="1">Aspartate alpha-decarboxylase</fullName>
    </alternativeName>
    <component>
        <recommendedName>
            <fullName evidence="1">Aspartate 1-decarboxylase beta chain</fullName>
        </recommendedName>
    </component>
    <component>
        <recommendedName>
            <fullName evidence="1">Aspartate 1-decarboxylase alpha chain</fullName>
        </recommendedName>
    </component>
</protein>
<name>PAND_MYCSJ</name>
<reference key="1">
    <citation type="submission" date="2007-02" db="EMBL/GenBank/DDBJ databases">
        <title>Complete sequence of Mycobacterium sp. JLS.</title>
        <authorList>
            <consortium name="US DOE Joint Genome Institute"/>
            <person name="Copeland A."/>
            <person name="Lucas S."/>
            <person name="Lapidus A."/>
            <person name="Barry K."/>
            <person name="Detter J.C."/>
            <person name="Glavina del Rio T."/>
            <person name="Hammon N."/>
            <person name="Israni S."/>
            <person name="Dalin E."/>
            <person name="Tice H."/>
            <person name="Pitluck S."/>
            <person name="Chain P."/>
            <person name="Malfatti S."/>
            <person name="Shin M."/>
            <person name="Vergez L."/>
            <person name="Schmutz J."/>
            <person name="Larimer F."/>
            <person name="Land M."/>
            <person name="Hauser L."/>
            <person name="Kyrpides N."/>
            <person name="Mikhailova N."/>
            <person name="Miller C.D."/>
            <person name="Anderson A.J."/>
            <person name="Sims R.C."/>
            <person name="Richardson P."/>
        </authorList>
    </citation>
    <scope>NUCLEOTIDE SEQUENCE [LARGE SCALE GENOMIC DNA]</scope>
    <source>
        <strain>JLS</strain>
    </source>
</reference>
<dbReference type="EC" id="4.1.1.11" evidence="1"/>
<dbReference type="EMBL" id="CP000580">
    <property type="protein sequence ID" value="ABO00912.1"/>
    <property type="molecule type" value="Genomic_DNA"/>
</dbReference>
<dbReference type="SMR" id="A3Q6Y4"/>
<dbReference type="KEGG" id="mjl:Mjls_5147"/>
<dbReference type="HOGENOM" id="CLU_115305_2_0_11"/>
<dbReference type="BioCyc" id="MSP164757:G1G8C-5197-MONOMER"/>
<dbReference type="UniPathway" id="UPA00028">
    <property type="reaction ID" value="UER00002"/>
</dbReference>
<dbReference type="GO" id="GO:0005829">
    <property type="term" value="C:cytosol"/>
    <property type="evidence" value="ECO:0007669"/>
    <property type="project" value="TreeGrafter"/>
</dbReference>
<dbReference type="GO" id="GO:0004068">
    <property type="term" value="F:aspartate 1-decarboxylase activity"/>
    <property type="evidence" value="ECO:0007669"/>
    <property type="project" value="UniProtKB-UniRule"/>
</dbReference>
<dbReference type="GO" id="GO:0006523">
    <property type="term" value="P:alanine biosynthetic process"/>
    <property type="evidence" value="ECO:0007669"/>
    <property type="project" value="InterPro"/>
</dbReference>
<dbReference type="GO" id="GO:0015940">
    <property type="term" value="P:pantothenate biosynthetic process"/>
    <property type="evidence" value="ECO:0007669"/>
    <property type="project" value="UniProtKB-UniRule"/>
</dbReference>
<dbReference type="CDD" id="cd06919">
    <property type="entry name" value="Asp_decarbox"/>
    <property type="match status" value="1"/>
</dbReference>
<dbReference type="Gene3D" id="2.40.40.20">
    <property type="match status" value="1"/>
</dbReference>
<dbReference type="HAMAP" id="MF_00446">
    <property type="entry name" value="PanD"/>
    <property type="match status" value="1"/>
</dbReference>
<dbReference type="InterPro" id="IPR009010">
    <property type="entry name" value="Asp_de-COase-like_dom_sf"/>
</dbReference>
<dbReference type="InterPro" id="IPR003190">
    <property type="entry name" value="Asp_decarbox"/>
</dbReference>
<dbReference type="NCBIfam" id="TIGR00223">
    <property type="entry name" value="panD"/>
    <property type="match status" value="1"/>
</dbReference>
<dbReference type="PANTHER" id="PTHR21012">
    <property type="entry name" value="ASPARTATE 1-DECARBOXYLASE"/>
    <property type="match status" value="1"/>
</dbReference>
<dbReference type="PANTHER" id="PTHR21012:SF0">
    <property type="entry name" value="ASPARTATE 1-DECARBOXYLASE"/>
    <property type="match status" value="1"/>
</dbReference>
<dbReference type="Pfam" id="PF02261">
    <property type="entry name" value="Asp_decarbox"/>
    <property type="match status" value="1"/>
</dbReference>
<dbReference type="PIRSF" id="PIRSF006246">
    <property type="entry name" value="Asp_decarbox"/>
    <property type="match status" value="1"/>
</dbReference>
<dbReference type="SUPFAM" id="SSF50692">
    <property type="entry name" value="ADC-like"/>
    <property type="match status" value="1"/>
</dbReference>
<feature type="chain" id="PRO_0000307023" description="Aspartate 1-decarboxylase beta chain" evidence="1">
    <location>
        <begin position="1"/>
        <end position="24"/>
    </location>
</feature>
<feature type="chain" id="PRO_0000307024" description="Aspartate 1-decarboxylase alpha chain" evidence="1">
    <location>
        <begin position="25"/>
        <end position="135"/>
    </location>
</feature>
<feature type="active site" description="Schiff-base intermediate with substrate; via pyruvic acid" evidence="1">
    <location>
        <position position="25"/>
    </location>
</feature>
<feature type="active site" description="Proton donor" evidence="1">
    <location>
        <position position="58"/>
    </location>
</feature>
<feature type="binding site" evidence="1">
    <location>
        <position position="57"/>
    </location>
    <ligand>
        <name>substrate</name>
    </ligand>
</feature>
<feature type="binding site" evidence="1">
    <location>
        <begin position="73"/>
        <end position="75"/>
    </location>
    <ligand>
        <name>substrate</name>
    </ligand>
</feature>
<feature type="modified residue" description="Pyruvic acid (Ser)" evidence="1">
    <location>
        <position position="25"/>
    </location>
</feature>
<accession>A3Q6Y4</accession>
<keyword id="KW-0068">Autocatalytic cleavage</keyword>
<keyword id="KW-0963">Cytoplasm</keyword>
<keyword id="KW-0210">Decarboxylase</keyword>
<keyword id="KW-0456">Lyase</keyword>
<keyword id="KW-0566">Pantothenate biosynthesis</keyword>
<keyword id="KW-0670">Pyruvate</keyword>
<keyword id="KW-0704">Schiff base</keyword>
<keyword id="KW-0865">Zymogen</keyword>
<sequence>MLRTMLKSKIHRATVTQSDLHYVGSVTIDADLMDAADLIEGEQVTIVDIDNGNRLVTYAITGARGSGVIGINGAAAHLVHPGDLVILIAYGTMEDAEARAYQPRVVFVDADNRQVHLGADPAMVPDTAVDLMSPR</sequence>
<proteinExistence type="inferred from homology"/>